<organism>
    <name type="scientific">Vitis vinifera</name>
    <name type="common">Grape</name>
    <dbReference type="NCBI Taxonomy" id="29760"/>
    <lineage>
        <taxon>Eukaryota</taxon>
        <taxon>Viridiplantae</taxon>
        <taxon>Streptophyta</taxon>
        <taxon>Embryophyta</taxon>
        <taxon>Tracheophyta</taxon>
        <taxon>Spermatophyta</taxon>
        <taxon>Magnoliopsida</taxon>
        <taxon>eudicotyledons</taxon>
        <taxon>Gunneridae</taxon>
        <taxon>Pentapetalae</taxon>
        <taxon>rosids</taxon>
        <taxon>Vitales</taxon>
        <taxon>Vitaceae</taxon>
        <taxon>Viteae</taxon>
        <taxon>Vitis</taxon>
    </lineage>
</organism>
<gene>
    <name evidence="1" type="primary">ndhC</name>
</gene>
<name>NU3C_VITVI</name>
<protein>
    <recommendedName>
        <fullName evidence="1">NAD(P)H-quinone oxidoreductase subunit 3, chloroplastic</fullName>
        <ecNumber evidence="1">7.1.1.-</ecNumber>
    </recommendedName>
    <alternativeName>
        <fullName evidence="1">NAD(P)H dehydrogenase subunit 3</fullName>
    </alternativeName>
    <alternativeName>
        <fullName evidence="1">NADH-plastoquinone oxidoreductase subunit 3</fullName>
    </alternativeName>
</protein>
<evidence type="ECO:0000255" key="1">
    <source>
        <dbReference type="HAMAP-Rule" id="MF_01394"/>
    </source>
</evidence>
<dbReference type="EC" id="7.1.1.-" evidence="1"/>
<dbReference type="EMBL" id="DQ424856">
    <property type="protein sequence ID" value="ABE47539.1"/>
    <property type="molecule type" value="Genomic_DNA"/>
</dbReference>
<dbReference type="RefSeq" id="YP_567081.1">
    <property type="nucleotide sequence ID" value="NC_007957.1"/>
</dbReference>
<dbReference type="SMR" id="Q0ZJ15"/>
<dbReference type="FunCoup" id="Q0ZJ15">
    <property type="interactions" value="49"/>
</dbReference>
<dbReference type="STRING" id="29760.Q0ZJ15"/>
<dbReference type="GeneID" id="4025143"/>
<dbReference type="KEGG" id="vvi:4025143"/>
<dbReference type="InParanoid" id="Q0ZJ15"/>
<dbReference type="OrthoDB" id="61263at71240"/>
<dbReference type="Proteomes" id="UP000009183">
    <property type="component" value="Chloroplast"/>
</dbReference>
<dbReference type="GO" id="GO:0009535">
    <property type="term" value="C:chloroplast thylakoid membrane"/>
    <property type="evidence" value="ECO:0007669"/>
    <property type="project" value="UniProtKB-SubCell"/>
</dbReference>
<dbReference type="GO" id="GO:0030964">
    <property type="term" value="C:NADH dehydrogenase complex"/>
    <property type="evidence" value="ECO:0000318"/>
    <property type="project" value="GO_Central"/>
</dbReference>
<dbReference type="GO" id="GO:0008137">
    <property type="term" value="F:NADH dehydrogenase (ubiquinone) activity"/>
    <property type="evidence" value="ECO:0000318"/>
    <property type="project" value="GO_Central"/>
</dbReference>
<dbReference type="GO" id="GO:0048038">
    <property type="term" value="F:quinone binding"/>
    <property type="evidence" value="ECO:0007669"/>
    <property type="project" value="UniProtKB-KW"/>
</dbReference>
<dbReference type="GO" id="GO:0019684">
    <property type="term" value="P:photosynthesis, light reaction"/>
    <property type="evidence" value="ECO:0007669"/>
    <property type="project" value="UniProtKB-UniRule"/>
</dbReference>
<dbReference type="FunFam" id="1.20.58.1610:FF:000001">
    <property type="entry name" value="NAD(P)H-quinone oxidoreductase subunit 3, chloroplastic"/>
    <property type="match status" value="1"/>
</dbReference>
<dbReference type="Gene3D" id="1.20.58.1610">
    <property type="entry name" value="NADH:ubiquinone/plastoquinone oxidoreductase, chain 3"/>
    <property type="match status" value="1"/>
</dbReference>
<dbReference type="HAMAP" id="MF_01394">
    <property type="entry name" value="NDH1_NuoA"/>
    <property type="match status" value="1"/>
</dbReference>
<dbReference type="InterPro" id="IPR023043">
    <property type="entry name" value="NAD(P)H_OxRDtase_bac/plastid"/>
</dbReference>
<dbReference type="InterPro" id="IPR000440">
    <property type="entry name" value="NADH_UbQ/plastoQ_OxRdtase_su3"/>
</dbReference>
<dbReference type="InterPro" id="IPR038430">
    <property type="entry name" value="NDAH_ubi_oxred_su3_sf"/>
</dbReference>
<dbReference type="PANTHER" id="PTHR11058">
    <property type="entry name" value="NADH-UBIQUINONE OXIDOREDUCTASE CHAIN 3"/>
    <property type="match status" value="1"/>
</dbReference>
<dbReference type="PANTHER" id="PTHR11058:SF9">
    <property type="entry name" value="NADH-UBIQUINONE OXIDOREDUCTASE CHAIN 3"/>
    <property type="match status" value="1"/>
</dbReference>
<dbReference type="Pfam" id="PF00507">
    <property type="entry name" value="Oxidored_q4"/>
    <property type="match status" value="1"/>
</dbReference>
<comment type="function">
    <text evidence="1">NDH shuttles electrons from NAD(P)H:plastoquinone, via FMN and iron-sulfur (Fe-S) centers, to quinones in the photosynthetic chain and possibly in a chloroplast respiratory chain. The immediate electron acceptor for the enzyme in this species is believed to be plastoquinone. Couples the redox reaction to proton translocation, and thus conserves the redox energy in a proton gradient.</text>
</comment>
<comment type="catalytic activity">
    <reaction evidence="1">
        <text>a plastoquinone + NADH + (n+1) H(+)(in) = a plastoquinol + NAD(+) + n H(+)(out)</text>
        <dbReference type="Rhea" id="RHEA:42608"/>
        <dbReference type="Rhea" id="RHEA-COMP:9561"/>
        <dbReference type="Rhea" id="RHEA-COMP:9562"/>
        <dbReference type="ChEBI" id="CHEBI:15378"/>
        <dbReference type="ChEBI" id="CHEBI:17757"/>
        <dbReference type="ChEBI" id="CHEBI:57540"/>
        <dbReference type="ChEBI" id="CHEBI:57945"/>
        <dbReference type="ChEBI" id="CHEBI:62192"/>
    </reaction>
</comment>
<comment type="catalytic activity">
    <reaction evidence="1">
        <text>a plastoquinone + NADPH + (n+1) H(+)(in) = a plastoquinol + NADP(+) + n H(+)(out)</text>
        <dbReference type="Rhea" id="RHEA:42612"/>
        <dbReference type="Rhea" id="RHEA-COMP:9561"/>
        <dbReference type="Rhea" id="RHEA-COMP:9562"/>
        <dbReference type="ChEBI" id="CHEBI:15378"/>
        <dbReference type="ChEBI" id="CHEBI:17757"/>
        <dbReference type="ChEBI" id="CHEBI:57783"/>
        <dbReference type="ChEBI" id="CHEBI:58349"/>
        <dbReference type="ChEBI" id="CHEBI:62192"/>
    </reaction>
</comment>
<comment type="subunit">
    <text evidence="1">NDH is composed of at least 16 different subunits, 5 of which are encoded in the nucleus.</text>
</comment>
<comment type="subcellular location">
    <subcellularLocation>
        <location evidence="1">Plastid</location>
        <location evidence="1">Chloroplast thylakoid membrane</location>
        <topology evidence="1">Multi-pass membrane protein</topology>
    </subcellularLocation>
</comment>
<comment type="similarity">
    <text evidence="1">Belongs to the complex I subunit 3 family.</text>
</comment>
<accession>Q0ZJ15</accession>
<proteinExistence type="inferred from homology"/>
<sequence>MFLLYEYDIFWAFLIISSVIPILAFFISGVLAPISKGPEKLSSYESGIEPMGDAWLQFRIRYYMFALVFVVFDVETVFLYPWAMSFDVLGVSVFIEALIFVLILIVGSVYAWRKGALEWS</sequence>
<feature type="chain" id="PRO_0000362876" description="NAD(P)H-quinone oxidoreductase subunit 3, chloroplastic">
    <location>
        <begin position="1"/>
        <end position="120"/>
    </location>
</feature>
<feature type="transmembrane region" description="Helical" evidence="1">
    <location>
        <begin position="9"/>
        <end position="29"/>
    </location>
</feature>
<feature type="transmembrane region" description="Helical" evidence="1">
    <location>
        <begin position="64"/>
        <end position="84"/>
    </location>
</feature>
<feature type="transmembrane region" description="Helical" evidence="1">
    <location>
        <begin position="88"/>
        <end position="108"/>
    </location>
</feature>
<reference key="1">
    <citation type="journal article" date="2006" name="BMC Evol. Biol.">
        <title>Phylogenetic analyses of Vitis (Vitaceae) based on complete chloroplast genome sequences: effects of taxon sampling and phylogenetic methods on resolving relationships among rosids.</title>
        <authorList>
            <person name="Jansen R.K."/>
            <person name="Kaittanis C."/>
            <person name="Lee S.-B."/>
            <person name="Saski C."/>
            <person name="Tomkins J."/>
            <person name="Alverson A.J."/>
            <person name="Daniell H."/>
        </authorList>
    </citation>
    <scope>NUCLEOTIDE SEQUENCE [LARGE SCALE GENOMIC DNA]</scope>
    <source>
        <strain>cv. Maxxa</strain>
    </source>
</reference>
<geneLocation type="chloroplast"/>
<keyword id="KW-0150">Chloroplast</keyword>
<keyword id="KW-0472">Membrane</keyword>
<keyword id="KW-0520">NAD</keyword>
<keyword id="KW-0521">NADP</keyword>
<keyword id="KW-0934">Plastid</keyword>
<keyword id="KW-0618">Plastoquinone</keyword>
<keyword id="KW-0874">Quinone</keyword>
<keyword id="KW-1185">Reference proteome</keyword>
<keyword id="KW-0793">Thylakoid</keyword>
<keyword id="KW-1278">Translocase</keyword>
<keyword id="KW-0812">Transmembrane</keyword>
<keyword id="KW-1133">Transmembrane helix</keyword>
<keyword id="KW-0813">Transport</keyword>